<evidence type="ECO:0000255" key="1">
    <source>
        <dbReference type="HAMAP-Rule" id="MF_00017"/>
    </source>
</evidence>
<organism>
    <name type="scientific">Burkholderia lata (strain ATCC 17760 / DSM 23089 / LMG 22485 / NCIMB 9086 / R18194 / 383)</name>
    <dbReference type="NCBI Taxonomy" id="482957"/>
    <lineage>
        <taxon>Bacteria</taxon>
        <taxon>Pseudomonadati</taxon>
        <taxon>Pseudomonadota</taxon>
        <taxon>Betaproteobacteria</taxon>
        <taxon>Burkholderiales</taxon>
        <taxon>Burkholderiaceae</taxon>
        <taxon>Burkholderia</taxon>
        <taxon>Burkholderia cepacia complex</taxon>
    </lineage>
</organism>
<reference key="1">
    <citation type="submission" date="2005-10" db="EMBL/GenBank/DDBJ databases">
        <title>Complete sequence of chromosome 1 of Burkholderia sp. 383.</title>
        <authorList>
            <consortium name="US DOE Joint Genome Institute"/>
            <person name="Copeland A."/>
            <person name="Lucas S."/>
            <person name="Lapidus A."/>
            <person name="Barry K."/>
            <person name="Detter J.C."/>
            <person name="Glavina T."/>
            <person name="Hammon N."/>
            <person name="Israni S."/>
            <person name="Pitluck S."/>
            <person name="Chain P."/>
            <person name="Malfatti S."/>
            <person name="Shin M."/>
            <person name="Vergez L."/>
            <person name="Schmutz J."/>
            <person name="Larimer F."/>
            <person name="Land M."/>
            <person name="Kyrpides N."/>
            <person name="Lykidis A."/>
            <person name="Richardson P."/>
        </authorList>
    </citation>
    <scope>NUCLEOTIDE SEQUENCE [LARGE SCALE GENOMIC DNA]</scope>
    <source>
        <strain>ATCC 17760 / DSM 23089 / LMG 22485 / NCIMB 9086 / R18194 / 383</strain>
    </source>
</reference>
<name>RECR_BURL3</name>
<comment type="function">
    <text evidence="1">May play a role in DNA repair. It seems to be involved in an RecBC-independent recombinational process of DNA repair. It may act with RecF and RecO.</text>
</comment>
<comment type="similarity">
    <text evidence="1">Belongs to the RecR family.</text>
</comment>
<dbReference type="EMBL" id="CP000151">
    <property type="protein sequence ID" value="ABB08720.1"/>
    <property type="molecule type" value="Genomic_DNA"/>
</dbReference>
<dbReference type="RefSeq" id="WP_006478665.1">
    <property type="nucleotide sequence ID" value="NZ_WNDV01000021.1"/>
</dbReference>
<dbReference type="SMR" id="Q39FP6"/>
<dbReference type="GeneID" id="93191823"/>
<dbReference type="KEGG" id="bur:Bcep18194_A5126"/>
<dbReference type="HOGENOM" id="CLU_060739_1_2_4"/>
<dbReference type="Proteomes" id="UP000002705">
    <property type="component" value="Chromosome 1"/>
</dbReference>
<dbReference type="GO" id="GO:0003677">
    <property type="term" value="F:DNA binding"/>
    <property type="evidence" value="ECO:0007669"/>
    <property type="project" value="UniProtKB-UniRule"/>
</dbReference>
<dbReference type="GO" id="GO:0008270">
    <property type="term" value="F:zinc ion binding"/>
    <property type="evidence" value="ECO:0007669"/>
    <property type="project" value="UniProtKB-KW"/>
</dbReference>
<dbReference type="GO" id="GO:0006310">
    <property type="term" value="P:DNA recombination"/>
    <property type="evidence" value="ECO:0007669"/>
    <property type="project" value="UniProtKB-UniRule"/>
</dbReference>
<dbReference type="GO" id="GO:0006281">
    <property type="term" value="P:DNA repair"/>
    <property type="evidence" value="ECO:0007669"/>
    <property type="project" value="UniProtKB-UniRule"/>
</dbReference>
<dbReference type="CDD" id="cd01025">
    <property type="entry name" value="TOPRIM_recR"/>
    <property type="match status" value="1"/>
</dbReference>
<dbReference type="Gene3D" id="3.40.1360.10">
    <property type="match status" value="1"/>
</dbReference>
<dbReference type="Gene3D" id="6.10.250.240">
    <property type="match status" value="1"/>
</dbReference>
<dbReference type="Gene3D" id="1.10.8.420">
    <property type="entry name" value="RecR Domain 1"/>
    <property type="match status" value="1"/>
</dbReference>
<dbReference type="HAMAP" id="MF_00017">
    <property type="entry name" value="RecR"/>
    <property type="match status" value="1"/>
</dbReference>
<dbReference type="InterPro" id="IPR000093">
    <property type="entry name" value="DNA_Rcmb_RecR"/>
</dbReference>
<dbReference type="InterPro" id="IPR023627">
    <property type="entry name" value="Rcmb_RecR"/>
</dbReference>
<dbReference type="InterPro" id="IPR015967">
    <property type="entry name" value="Rcmb_RecR_Znf"/>
</dbReference>
<dbReference type="InterPro" id="IPR006171">
    <property type="entry name" value="TOPRIM_dom"/>
</dbReference>
<dbReference type="InterPro" id="IPR034137">
    <property type="entry name" value="TOPRIM_RecR"/>
</dbReference>
<dbReference type="NCBIfam" id="TIGR00615">
    <property type="entry name" value="recR"/>
    <property type="match status" value="1"/>
</dbReference>
<dbReference type="PANTHER" id="PTHR30446">
    <property type="entry name" value="RECOMBINATION PROTEIN RECR"/>
    <property type="match status" value="1"/>
</dbReference>
<dbReference type="PANTHER" id="PTHR30446:SF0">
    <property type="entry name" value="RECOMBINATION PROTEIN RECR"/>
    <property type="match status" value="1"/>
</dbReference>
<dbReference type="Pfam" id="PF21175">
    <property type="entry name" value="RecR_C"/>
    <property type="match status" value="1"/>
</dbReference>
<dbReference type="Pfam" id="PF21176">
    <property type="entry name" value="RecR_HhH"/>
    <property type="match status" value="1"/>
</dbReference>
<dbReference type="Pfam" id="PF02132">
    <property type="entry name" value="RecR_ZnF"/>
    <property type="match status" value="1"/>
</dbReference>
<dbReference type="Pfam" id="PF13662">
    <property type="entry name" value="Toprim_4"/>
    <property type="match status" value="1"/>
</dbReference>
<dbReference type="SMART" id="SM00493">
    <property type="entry name" value="TOPRIM"/>
    <property type="match status" value="1"/>
</dbReference>
<dbReference type="SUPFAM" id="SSF111304">
    <property type="entry name" value="Recombination protein RecR"/>
    <property type="match status" value="1"/>
</dbReference>
<dbReference type="PROSITE" id="PS01300">
    <property type="entry name" value="RECR"/>
    <property type="match status" value="1"/>
</dbReference>
<dbReference type="PROSITE" id="PS50880">
    <property type="entry name" value="TOPRIM"/>
    <property type="match status" value="1"/>
</dbReference>
<feature type="chain" id="PRO_0000322871" description="Recombination protein RecR">
    <location>
        <begin position="1"/>
        <end position="198"/>
    </location>
</feature>
<feature type="domain" description="Toprim" evidence="1">
    <location>
        <begin position="80"/>
        <end position="175"/>
    </location>
</feature>
<feature type="zinc finger region" description="C4-type" evidence="1">
    <location>
        <begin position="57"/>
        <end position="72"/>
    </location>
</feature>
<accession>Q39FP6</accession>
<proteinExistence type="inferred from homology"/>
<keyword id="KW-0227">DNA damage</keyword>
<keyword id="KW-0233">DNA recombination</keyword>
<keyword id="KW-0234">DNA repair</keyword>
<keyword id="KW-0479">Metal-binding</keyword>
<keyword id="KW-0862">Zinc</keyword>
<keyword id="KW-0863">Zinc-finger</keyword>
<gene>
    <name evidence="1" type="primary">recR</name>
    <name type="ordered locus">Bcep18194_A5126</name>
</gene>
<sequence length="198" mass="21849">MKQPSALSALVEALRVLPGVGPKSAQRMAVHLMQHDREGAERLGRSLLFATEHLQHCEKCNTFTEAQICEVCSDEERDPTLLCVVETPADQIMLEQTMTYRGLYFVLMGRLSPLDGIGPKEIHFDRLVRRASDGVVKEVVLATNFTNEGEATAHYLGQTLKARGLAVTRLARGVPVGGELEYVDAGTIARAMLDRRTM</sequence>
<protein>
    <recommendedName>
        <fullName evidence="1">Recombination protein RecR</fullName>
    </recommendedName>
</protein>